<gene>
    <name type="primary">nhaR</name>
    <name type="synonym">antO</name>
    <name type="ordered locus">b0020</name>
    <name type="ordered locus">JW0019</name>
</gene>
<dbReference type="EMBL" id="X04382">
    <property type="protein sequence ID" value="CAA27969.1"/>
    <property type="molecule type" value="Genomic_DNA"/>
</dbReference>
<dbReference type="EMBL" id="L24072">
    <property type="protein sequence ID" value="AAA24221.1"/>
    <property type="molecule type" value="Genomic_DNA"/>
</dbReference>
<dbReference type="EMBL" id="U00096">
    <property type="protein sequence ID" value="AAC73131.1"/>
    <property type="molecule type" value="Genomic_DNA"/>
</dbReference>
<dbReference type="EMBL" id="AP009048">
    <property type="protein sequence ID" value="BAE76032.1"/>
    <property type="molecule type" value="Genomic_DNA"/>
</dbReference>
<dbReference type="RefSeq" id="NP_414561.1">
    <property type="nucleotide sequence ID" value="NC_000913.3"/>
</dbReference>
<dbReference type="SMR" id="P0A9G2"/>
<dbReference type="BioGRID" id="4259724">
    <property type="interactions" value="113"/>
</dbReference>
<dbReference type="FunCoup" id="P0A9G2">
    <property type="interactions" value="25"/>
</dbReference>
<dbReference type="IntAct" id="P0A9G2">
    <property type="interactions" value="2"/>
</dbReference>
<dbReference type="STRING" id="511145.b0020"/>
<dbReference type="jPOST" id="P0A9G2"/>
<dbReference type="PaxDb" id="511145-b0020"/>
<dbReference type="EnsemblBacteria" id="AAC73131">
    <property type="protein sequence ID" value="AAC73131"/>
    <property type="gene ID" value="b0020"/>
</dbReference>
<dbReference type="GeneID" id="944757"/>
<dbReference type="KEGG" id="ecj:JW0019"/>
<dbReference type="KEGG" id="eco:b0020"/>
<dbReference type="PATRIC" id="fig|511145.12.peg.17"/>
<dbReference type="EchoBASE" id="EB1070"/>
<dbReference type="eggNOG" id="COG0583">
    <property type="taxonomic scope" value="Bacteria"/>
</dbReference>
<dbReference type="HOGENOM" id="CLU_039613_9_0_6"/>
<dbReference type="InParanoid" id="P0A9G2"/>
<dbReference type="OMA" id="MEWLNYH"/>
<dbReference type="OrthoDB" id="464481at2"/>
<dbReference type="PhylomeDB" id="P0A9G2"/>
<dbReference type="BioCyc" id="EcoCyc:PD00474"/>
<dbReference type="PHI-base" id="PHI:3267"/>
<dbReference type="PRO" id="PR:P0A9G2"/>
<dbReference type="Proteomes" id="UP000000625">
    <property type="component" value="Chromosome"/>
</dbReference>
<dbReference type="GO" id="GO:0005737">
    <property type="term" value="C:cytoplasm"/>
    <property type="evidence" value="ECO:0007669"/>
    <property type="project" value="UniProtKB-SubCell"/>
</dbReference>
<dbReference type="GO" id="GO:0003677">
    <property type="term" value="F:DNA binding"/>
    <property type="evidence" value="ECO:0007669"/>
    <property type="project" value="UniProtKB-KW"/>
</dbReference>
<dbReference type="GO" id="GO:0001216">
    <property type="term" value="F:DNA-binding transcription activator activity"/>
    <property type="evidence" value="ECO:0000314"/>
    <property type="project" value="EcoCyc"/>
</dbReference>
<dbReference type="GO" id="GO:0003700">
    <property type="term" value="F:DNA-binding transcription factor activity"/>
    <property type="evidence" value="ECO:0000318"/>
    <property type="project" value="GO_Central"/>
</dbReference>
<dbReference type="GO" id="GO:2000144">
    <property type="term" value="P:positive regulation of DNA-templated transcription initiation"/>
    <property type="evidence" value="ECO:0000315"/>
    <property type="project" value="EcoCyc"/>
</dbReference>
<dbReference type="GO" id="GO:2000142">
    <property type="term" value="P:regulation of DNA-templated transcription initiation"/>
    <property type="evidence" value="ECO:0000318"/>
    <property type="project" value="GO_Central"/>
</dbReference>
<dbReference type="CDD" id="cd08429">
    <property type="entry name" value="PBP2_NhaR"/>
    <property type="match status" value="1"/>
</dbReference>
<dbReference type="FunFam" id="1.10.10.10:FF:000180">
    <property type="entry name" value="Transcriptional activator NhaR"/>
    <property type="match status" value="1"/>
</dbReference>
<dbReference type="Gene3D" id="1.10.10.10">
    <property type="entry name" value="Winged helix-like DNA-binding domain superfamily/Winged helix DNA-binding domain"/>
    <property type="match status" value="1"/>
</dbReference>
<dbReference type="InterPro" id="IPR005119">
    <property type="entry name" value="LysR_subst-bd"/>
</dbReference>
<dbReference type="InterPro" id="IPR000847">
    <property type="entry name" value="Tscrpt_reg_HTH_LysR"/>
</dbReference>
<dbReference type="InterPro" id="IPR036388">
    <property type="entry name" value="WH-like_DNA-bd_sf"/>
</dbReference>
<dbReference type="InterPro" id="IPR036390">
    <property type="entry name" value="WH_DNA-bd_sf"/>
</dbReference>
<dbReference type="NCBIfam" id="NF008284">
    <property type="entry name" value="PRK11062.1"/>
    <property type="match status" value="1"/>
</dbReference>
<dbReference type="PANTHER" id="PTHR30293:SF2">
    <property type="entry name" value="TRANSCRIPTIONAL ACTIVATOR PROTEIN NHAR"/>
    <property type="match status" value="1"/>
</dbReference>
<dbReference type="PANTHER" id="PTHR30293">
    <property type="entry name" value="TRANSCRIPTIONAL REGULATORY PROTEIN NAC-RELATED"/>
    <property type="match status" value="1"/>
</dbReference>
<dbReference type="Pfam" id="PF00126">
    <property type="entry name" value="HTH_1"/>
    <property type="match status" value="1"/>
</dbReference>
<dbReference type="Pfam" id="PF03466">
    <property type="entry name" value="LysR_substrate"/>
    <property type="match status" value="1"/>
</dbReference>
<dbReference type="SUPFAM" id="SSF53850">
    <property type="entry name" value="Periplasmic binding protein-like II"/>
    <property type="match status" value="1"/>
</dbReference>
<dbReference type="SUPFAM" id="SSF46785">
    <property type="entry name" value="Winged helix' DNA-binding domain"/>
    <property type="match status" value="1"/>
</dbReference>
<dbReference type="PROSITE" id="PS50931">
    <property type="entry name" value="HTH_LYSR"/>
    <property type="match status" value="1"/>
</dbReference>
<organism>
    <name type="scientific">Escherichia coli (strain K12)</name>
    <dbReference type="NCBI Taxonomy" id="83333"/>
    <lineage>
        <taxon>Bacteria</taxon>
        <taxon>Pseudomonadati</taxon>
        <taxon>Pseudomonadota</taxon>
        <taxon>Gammaproteobacteria</taxon>
        <taxon>Enterobacterales</taxon>
        <taxon>Enterobacteriaceae</taxon>
        <taxon>Escherichia</taxon>
    </lineage>
</organism>
<accession>P0A9G2</accession>
<accession>P10087</accession>
<accession>P75619</accession>
<accession>Q2MCH4</accession>
<accession>Q47409</accession>
<accession>Q83SR2</accession>
<evidence type="ECO:0000255" key="1">
    <source>
        <dbReference type="PROSITE-ProRule" id="PRU00253"/>
    </source>
</evidence>
<evidence type="ECO:0000269" key="2">
    <source>
    </source>
</evidence>
<evidence type="ECO:0000269" key="3">
    <source>
    </source>
</evidence>
<evidence type="ECO:0000305" key="4"/>
<comment type="function">
    <text evidence="2">Plays a role in the positive regulation of NhaA.</text>
</comment>
<comment type="subcellular location">
    <subcellularLocation>
        <location>Cytoplasm</location>
    </subcellularLocation>
</comment>
<comment type="similarity">
    <text evidence="4">Belongs to the LysR transcriptional regulatory family.</text>
</comment>
<proteinExistence type="evidence at protein level"/>
<sequence>MSMSHINYNHLYYFWHVYKEGSVVGAAEALYLTPQTITGQIRALEERLQGKLFKRKGRGLEPSELGELVYRYADKMFTLSQEMLDIVNYRKESNLLFDVGVADALSKRLVSSVLNAAVVEGEPIHLRCFESTHEMLLEQLSQHKLDMIISDCPIDSTQQEGLFSVRIGECGVSFWCTNPPPEKPFPACLEERRLLIPGRRSMLGRKLLNWFNSQGLNVEILGEFDDAALMKAFGAMHNAIFVAPTLYAYDFYADKTVVEIGRVENVMEEYHAIFAERMIQHPAVQRICNTDYSALFSPAVR</sequence>
<protein>
    <recommendedName>
        <fullName>Transcriptional activator protein NhaR</fullName>
    </recommendedName>
    <alternativeName>
        <fullName>Na(+)/H(+) antiporter regulatory protein</fullName>
    </alternativeName>
</protein>
<name>NHAR_ECOLI</name>
<reference key="1">
    <citation type="journal article" date="1986" name="Nucleic Acids Res.">
        <title>Structure of the DNA distal to the gene for ribosomal protein S20 in Escherichia coli K12: presence of a strong terminator and an IS1 element.</title>
        <authorList>
            <person name="Mackie G.A."/>
        </authorList>
    </citation>
    <scope>NUCLEOTIDE SEQUENCE [GENOMIC DNA]</scope>
    <source>
        <strain>K12</strain>
    </source>
</reference>
<reference key="2">
    <citation type="submission" date="1993-09" db="EMBL/GenBank/DDBJ databases">
        <title>NhaR, a regulator of nhaA.</title>
        <authorList>
            <person name="Harel O."/>
        </authorList>
    </citation>
    <scope>NUCLEOTIDE SEQUENCE [GENOMIC DNA]</scope>
</reference>
<reference key="3">
    <citation type="journal article" date="1992" name="Nucleic Acids Res.">
        <title>Systematic sequencing of the Escherichia coli genome: analysis of the 0-2.4 min region.</title>
        <authorList>
            <person name="Yura T."/>
            <person name="Mori H."/>
            <person name="Nagai H."/>
            <person name="Nagata T."/>
            <person name="Ishihama A."/>
            <person name="Fujita N."/>
            <person name="Isono K."/>
            <person name="Mizobuchi K."/>
            <person name="Nakata A."/>
        </authorList>
    </citation>
    <scope>NUCLEOTIDE SEQUENCE [LARGE SCALE GENOMIC DNA]</scope>
    <source>
        <strain>K12</strain>
    </source>
</reference>
<reference key="4">
    <citation type="journal article" date="1997" name="Science">
        <title>The complete genome sequence of Escherichia coli K-12.</title>
        <authorList>
            <person name="Blattner F.R."/>
            <person name="Plunkett G. III"/>
            <person name="Bloch C.A."/>
            <person name="Perna N.T."/>
            <person name="Burland V."/>
            <person name="Riley M."/>
            <person name="Collado-Vides J."/>
            <person name="Glasner J.D."/>
            <person name="Rode C.K."/>
            <person name="Mayhew G.F."/>
            <person name="Gregor J."/>
            <person name="Davis N.W."/>
            <person name="Kirkpatrick H.A."/>
            <person name="Goeden M.A."/>
            <person name="Rose D.J."/>
            <person name="Mau B."/>
            <person name="Shao Y."/>
        </authorList>
    </citation>
    <scope>NUCLEOTIDE SEQUENCE [LARGE SCALE GENOMIC DNA]</scope>
    <source>
        <strain>K12 / MG1655 / ATCC 47076</strain>
    </source>
</reference>
<reference key="5">
    <citation type="journal article" date="2006" name="Mol. Syst. Biol.">
        <title>Highly accurate genome sequences of Escherichia coli K-12 strains MG1655 and W3110.</title>
        <authorList>
            <person name="Hayashi K."/>
            <person name="Morooka N."/>
            <person name="Yamamoto Y."/>
            <person name="Fujita K."/>
            <person name="Isono K."/>
            <person name="Choi S."/>
            <person name="Ohtsubo E."/>
            <person name="Baba T."/>
            <person name="Wanner B.L."/>
            <person name="Mori H."/>
            <person name="Horiuchi T."/>
        </authorList>
    </citation>
    <scope>NUCLEOTIDE SEQUENCE [LARGE SCALE GENOMIC DNA]</scope>
    <source>
        <strain>K12 / W3110 / ATCC 27325 / DSM 5911</strain>
    </source>
</reference>
<reference key="6">
    <citation type="journal article" date="1988" name="Proc. Natl. Acad. Sci. U.S.A.">
        <title>A large family of bacterial activator proteins.</title>
        <authorList>
            <person name="Henikoff S."/>
            <person name="Haughn G.W."/>
            <person name="Calvo J.M."/>
            <person name="Wallace J.C."/>
        </authorList>
    </citation>
    <scope>IDENTIFICATION OF PROTEIN</scope>
    <scope>POSSIBLE DNA-BINDING REGION</scope>
</reference>
<reference key="7">
    <citation type="journal article" date="1992" name="J. Biol. Chem.">
        <title>NhaR, a protein homologous to a family of bacterial regulatory proteins (LysR), regulates nhaA, the sodium proton antiporter gene in Escherichia coli.</title>
        <authorList>
            <person name="Rahav-Manor O."/>
            <person name="Carmel O."/>
            <person name="Karpel R."/>
            <person name="Taglicht D."/>
            <person name="Glaser G."/>
            <person name="Schuldiner S."/>
            <person name="Padan E."/>
        </authorList>
    </citation>
    <scope>FUNCTION</scope>
</reference>
<reference key="8">
    <citation type="journal article" date="1994" name="EMBO J.">
        <title>A single amino acid substitution (Glu134--&gt;Ala) in NhaR1 increases the inducibility by Na+ of the product of nhaA, a Na+/H+ antiporter gene in Escherichia coli.</title>
        <authorList>
            <person name="Carmel O."/>
            <person name="Dover N."/>
            <person name="Rahav-Manor O."/>
            <person name="Dibrov P."/>
            <person name="Kirsch D."/>
            <person name="Karpel R."/>
            <person name="Schuldiner S."/>
            <person name="Padan E."/>
        </authorList>
    </citation>
    <scope>VARIANT NHAR1 ALA-134</scope>
</reference>
<keyword id="KW-0010">Activator</keyword>
<keyword id="KW-0963">Cytoplasm</keyword>
<keyword id="KW-0238">DNA-binding</keyword>
<keyword id="KW-1185">Reference proteome</keyword>
<keyword id="KW-0804">Transcription</keyword>
<keyword id="KW-0805">Transcription regulation</keyword>
<feature type="chain" id="PRO_0000105689" description="Transcriptional activator protein NhaR">
    <location>
        <begin position="1"/>
        <end position="301"/>
    </location>
</feature>
<feature type="domain" description="HTH lysR-type" evidence="1">
    <location>
        <begin position="6"/>
        <end position="63"/>
    </location>
</feature>
<feature type="DNA-binding region" description="H-T-H motif" evidence="1">
    <location>
        <begin position="23"/>
        <end position="42"/>
    </location>
</feature>
<feature type="sequence variant" description="In nhaR1; increases the transcription of NhaA." evidence="3">
    <original>E</original>
    <variation>A</variation>
    <location>
        <position position="134"/>
    </location>
</feature>
<feature type="sequence conflict" description="In Ref. 1, 2 and 3." evidence="4" ref="1 2 3">
    <original>ER</original>
    <variation>DA</variation>
    <location>
        <begin position="46"/>
        <end position="47"/>
    </location>
</feature>
<feature type="sequence conflict" description="In Ref. 1, 2 and 3." evidence="4" ref="1 2 3">
    <original>G</original>
    <variation>A</variation>
    <location>
        <position position="50"/>
    </location>
</feature>
<feature type="sequence conflict" description="In Ref. 1 and 3." evidence="4" ref="1 3">
    <original>RGLEPSEL</original>
    <variation>TWSRTQRA</variation>
    <location>
        <begin position="58"/>
        <end position="65"/>
    </location>
</feature>
<feature type="sequence conflict" description="In Ref. 1, 2 and 3." evidence="4" ref="1 2 3">
    <original>D</original>
    <variation>E</variation>
    <location>
        <position position="146"/>
    </location>
</feature>
<feature type="sequence conflict" description="In Ref. 1 and 3." evidence="4" ref="1 3">
    <original>FGAMHNAIFVAPTLYAYDFYADKTVVEIGRVENVMEEYHAIFAERMIQHPAVQRICNTDYSALFSPAVR</original>
    <variation>WLQVLLVAMQMQSSLPQRFMHMTFMPIKLS</variation>
    <location>
        <begin position="233"/>
        <end position="301"/>
    </location>
</feature>